<feature type="initiator methionine" description="Removed" evidence="1">
    <location>
        <position position="1"/>
    </location>
</feature>
<feature type="chain" id="PRO_0000177323" description="Large ribosomal subunit protein bL35">
    <location>
        <begin position="2"/>
        <end position="66"/>
    </location>
</feature>
<feature type="region of interest" description="Disordered" evidence="3">
    <location>
        <begin position="1"/>
        <end position="48"/>
    </location>
</feature>
<feature type="compositionally biased region" description="Basic residues" evidence="3">
    <location>
        <begin position="1"/>
        <end position="26"/>
    </location>
</feature>
<feature type="compositionally biased region" description="Basic residues" evidence="3">
    <location>
        <begin position="38"/>
        <end position="48"/>
    </location>
</feature>
<accession>Q9K868</accession>
<protein>
    <recommendedName>
        <fullName evidence="2">Large ribosomal subunit protein bL35</fullName>
    </recommendedName>
    <alternativeName>
        <fullName evidence="4">50S ribosomal protein L35</fullName>
    </alternativeName>
</protein>
<comment type="similarity">
    <text evidence="2">Belongs to the bacterial ribosomal protein bL35 family.</text>
</comment>
<proteinExistence type="inferred from homology"/>
<keyword id="KW-1185">Reference proteome</keyword>
<keyword id="KW-0687">Ribonucleoprotein</keyword>
<keyword id="KW-0689">Ribosomal protein</keyword>
<sequence length="66" mass="7700">MPKMKTHKGAAKRFKKTGSGKLKRSHAFTSHLFANKSQKQKRKLRKSAIVHSGDFKRIREMLTYKK</sequence>
<organism>
    <name type="scientific">Halalkalibacterium halodurans (strain ATCC BAA-125 / DSM 18197 / FERM 7344 / JCM 9153 / C-125)</name>
    <name type="common">Bacillus halodurans</name>
    <dbReference type="NCBI Taxonomy" id="272558"/>
    <lineage>
        <taxon>Bacteria</taxon>
        <taxon>Bacillati</taxon>
        <taxon>Bacillota</taxon>
        <taxon>Bacilli</taxon>
        <taxon>Bacillales</taxon>
        <taxon>Bacillaceae</taxon>
        <taxon>Halalkalibacterium (ex Joshi et al. 2022)</taxon>
    </lineage>
</organism>
<dbReference type="EMBL" id="BA000004">
    <property type="protein sequence ID" value="BAB06858.1"/>
    <property type="molecule type" value="Genomic_DNA"/>
</dbReference>
<dbReference type="PIR" id="C84042">
    <property type="entry name" value="C84042"/>
</dbReference>
<dbReference type="RefSeq" id="WP_010899282.1">
    <property type="nucleotide sequence ID" value="NC_002570.2"/>
</dbReference>
<dbReference type="SMR" id="Q9K868"/>
<dbReference type="STRING" id="272558.gene:10729051"/>
<dbReference type="GeneID" id="87598659"/>
<dbReference type="KEGG" id="bha:BH3139"/>
<dbReference type="eggNOG" id="COG0291">
    <property type="taxonomic scope" value="Bacteria"/>
</dbReference>
<dbReference type="HOGENOM" id="CLU_169643_3_0_9"/>
<dbReference type="OrthoDB" id="47476at2"/>
<dbReference type="Proteomes" id="UP000001258">
    <property type="component" value="Chromosome"/>
</dbReference>
<dbReference type="GO" id="GO:0022625">
    <property type="term" value="C:cytosolic large ribosomal subunit"/>
    <property type="evidence" value="ECO:0007669"/>
    <property type="project" value="TreeGrafter"/>
</dbReference>
<dbReference type="GO" id="GO:0003735">
    <property type="term" value="F:structural constituent of ribosome"/>
    <property type="evidence" value="ECO:0007669"/>
    <property type="project" value="InterPro"/>
</dbReference>
<dbReference type="GO" id="GO:0006412">
    <property type="term" value="P:translation"/>
    <property type="evidence" value="ECO:0007669"/>
    <property type="project" value="UniProtKB-UniRule"/>
</dbReference>
<dbReference type="FunFam" id="4.10.410.60:FF:000001">
    <property type="entry name" value="50S ribosomal protein L35"/>
    <property type="match status" value="1"/>
</dbReference>
<dbReference type="Gene3D" id="4.10.410.60">
    <property type="match status" value="1"/>
</dbReference>
<dbReference type="HAMAP" id="MF_00514">
    <property type="entry name" value="Ribosomal_bL35"/>
    <property type="match status" value="1"/>
</dbReference>
<dbReference type="InterPro" id="IPR001706">
    <property type="entry name" value="Ribosomal_bL35"/>
</dbReference>
<dbReference type="InterPro" id="IPR021137">
    <property type="entry name" value="Ribosomal_bL35-like"/>
</dbReference>
<dbReference type="InterPro" id="IPR018265">
    <property type="entry name" value="Ribosomal_bL35_CS"/>
</dbReference>
<dbReference type="InterPro" id="IPR037229">
    <property type="entry name" value="Ribosomal_bL35_sf"/>
</dbReference>
<dbReference type="NCBIfam" id="TIGR00001">
    <property type="entry name" value="rpmI_bact"/>
    <property type="match status" value="1"/>
</dbReference>
<dbReference type="PANTHER" id="PTHR33343">
    <property type="entry name" value="54S RIBOSOMAL PROTEIN BL35M"/>
    <property type="match status" value="1"/>
</dbReference>
<dbReference type="PANTHER" id="PTHR33343:SF1">
    <property type="entry name" value="LARGE RIBOSOMAL SUBUNIT PROTEIN BL35M"/>
    <property type="match status" value="1"/>
</dbReference>
<dbReference type="Pfam" id="PF01632">
    <property type="entry name" value="Ribosomal_L35p"/>
    <property type="match status" value="1"/>
</dbReference>
<dbReference type="PRINTS" id="PR00064">
    <property type="entry name" value="RIBOSOMALL35"/>
</dbReference>
<dbReference type="SUPFAM" id="SSF143034">
    <property type="entry name" value="L35p-like"/>
    <property type="match status" value="1"/>
</dbReference>
<dbReference type="PROSITE" id="PS00936">
    <property type="entry name" value="RIBOSOMAL_L35"/>
    <property type="match status" value="1"/>
</dbReference>
<gene>
    <name evidence="2" type="primary">rpmI</name>
    <name type="ordered locus">BH3139</name>
</gene>
<reference key="1">
    <citation type="journal article" date="2000" name="Nucleic Acids Res.">
        <title>Complete genome sequence of the alkaliphilic bacterium Bacillus halodurans and genomic sequence comparison with Bacillus subtilis.</title>
        <authorList>
            <person name="Takami H."/>
            <person name="Nakasone K."/>
            <person name="Takaki Y."/>
            <person name="Maeno G."/>
            <person name="Sasaki R."/>
            <person name="Masui N."/>
            <person name="Fuji F."/>
            <person name="Hirama C."/>
            <person name="Nakamura Y."/>
            <person name="Ogasawara N."/>
            <person name="Kuhara S."/>
            <person name="Horikoshi K."/>
        </authorList>
    </citation>
    <scope>NUCLEOTIDE SEQUENCE [LARGE SCALE GENOMIC DNA]</scope>
    <source>
        <strain>ATCC BAA-125 / DSM 18197 / FERM 7344 / JCM 9153 / C-125</strain>
    </source>
</reference>
<name>RL35_HALH5</name>
<evidence type="ECO:0000250" key="1"/>
<evidence type="ECO:0000255" key="2">
    <source>
        <dbReference type="HAMAP-Rule" id="MF_00514"/>
    </source>
</evidence>
<evidence type="ECO:0000256" key="3">
    <source>
        <dbReference type="SAM" id="MobiDB-lite"/>
    </source>
</evidence>
<evidence type="ECO:0000305" key="4"/>